<evidence type="ECO:0000250" key="1">
    <source>
        <dbReference type="UniProtKB" id="E1B240"/>
    </source>
</evidence>
<evidence type="ECO:0000255" key="2"/>
<evidence type="ECO:0000269" key="3">
    <source>
    </source>
</evidence>
<evidence type="ECO:0000303" key="4">
    <source>
    </source>
</evidence>
<evidence type="ECO:0000305" key="5"/>
<evidence type="ECO:0000305" key="6">
    <source>
    </source>
</evidence>
<evidence type="ECO:0000312" key="7">
    <source>
        <dbReference type="EMBL" id="ABG72910.1"/>
    </source>
</evidence>
<accession>A0SN42</accession>
<sequence length="70" mass="8170">MFTLKKSLLLLFFLGTINLSLCEQERDADEEERRDDDEMDVEVEKRFLPLAVSLAANFLPKLFCKITKKC</sequence>
<reference key="1">
    <citation type="journal article" date="2006" name="Peptides">
        <title>Two families of antimicrobial peptides with multiple functions from skin of rufous-spotted torrent frog, Amolops loloensis.</title>
        <authorList>
            <person name="Lu Y."/>
            <person name="Li J."/>
            <person name="Yu H."/>
            <person name="Xu X."/>
            <person name="Liang J."/>
            <person name="Tian Y."/>
            <person name="Ma D."/>
            <person name="Lin G."/>
            <person name="Huang G."/>
            <person name="Lai R."/>
        </authorList>
    </citation>
    <scope>NUCLEOTIDE SEQUENCE [MRNA]</scope>
    <scope>PROTEIN SEQUENCE OF 47-70</scope>
    <scope>FUNCTION</scope>
    <scope>SUBCELLULAR LOCATION</scope>
    <scope>MASS SPECTROMETRY</scope>
    <source>
        <tissue>Skin</tissue>
        <tissue>Skin secretion</tissue>
    </source>
</reference>
<reference key="2">
    <citation type="journal article" date="2010" name="Comp. Biochem. Physiol.">
        <title>Five novel antimicrobial peptides from skin secretions of the frog, Amolops loloensis.</title>
        <authorList>
            <person name="Wang M."/>
            <person name="Wang Y."/>
            <person name="Wang A."/>
            <person name="Song Y."/>
            <person name="Ma D."/>
            <person name="Yang H."/>
            <person name="Ma Y."/>
            <person name="Lai R."/>
        </authorList>
    </citation>
    <scope>NOMENCLATURE</scope>
</reference>
<protein>
    <recommendedName>
        <fullName evidence="4">Brevinin-ALb</fullName>
    </recommendedName>
    <alternativeName>
        <fullName evidence="7">Amolopin-1b</fullName>
    </alternativeName>
    <alternativeName>
        <fullName evidence="4">Brevinin-1E-AL2</fullName>
    </alternativeName>
</protein>
<comment type="function">
    <text evidence="3">Antimicrobial peptide with activity against Gram-positive and Gram-negative bacteria and against fungi (PubMed:17000029). Has been tested against S.aureus (MIC=5.5 ug/mL), E.coli (MIC=6.5 ug/mL), B.dysenteriae (MIC=2.2 ug/mL), and C.albicans (MIC=7.5 ug/mL) (PubMed:17000029). Can regulate or mediate antimicrobial response by stimulating mast cell degranulation (PubMed:17000029). Induces histamine release (PubMed:17000029). Shows cytotoxicity toward solid tumor cell line HepG2 (PubMed:17000029). Also shows a potent hemolytic activity (LD(50)=5 ug/ml) (PubMed:17000029).</text>
</comment>
<comment type="subcellular location">
    <subcellularLocation>
        <location evidence="3">Secreted</location>
    </subcellularLocation>
</comment>
<comment type="tissue specificity">
    <text evidence="6">Expressed by the skin glands.</text>
</comment>
<comment type="mass spectrometry" mass="2663.7" method="FAB" evidence="3"/>
<comment type="similarity">
    <text evidence="5">Belongs to the frog skin active peptide (FSAP) family. Brevinin subfamily.</text>
</comment>
<comment type="online information" name="The antimicrobial peptide database">
    <link uri="https://wangapd3.com/database/query_output.php?ID=00861"/>
</comment>
<dbReference type="EMBL" id="DQ673113">
    <property type="protein sequence ID" value="ABG72910.1"/>
    <property type="molecule type" value="mRNA"/>
</dbReference>
<dbReference type="GO" id="GO:0005576">
    <property type="term" value="C:extracellular region"/>
    <property type="evidence" value="ECO:0007669"/>
    <property type="project" value="UniProtKB-SubCell"/>
</dbReference>
<dbReference type="GO" id="GO:0042742">
    <property type="term" value="P:defense response to bacterium"/>
    <property type="evidence" value="ECO:0007669"/>
    <property type="project" value="UniProtKB-KW"/>
</dbReference>
<dbReference type="GO" id="GO:0050832">
    <property type="term" value="P:defense response to fungus"/>
    <property type="evidence" value="ECO:0007669"/>
    <property type="project" value="UniProtKB-KW"/>
</dbReference>
<dbReference type="GO" id="GO:0045087">
    <property type="term" value="P:innate immune response"/>
    <property type="evidence" value="ECO:0007669"/>
    <property type="project" value="UniProtKB-KW"/>
</dbReference>
<dbReference type="GO" id="GO:0031640">
    <property type="term" value="P:killing of cells of another organism"/>
    <property type="evidence" value="ECO:0007669"/>
    <property type="project" value="UniProtKB-KW"/>
</dbReference>
<dbReference type="InterPro" id="IPR012520">
    <property type="entry name" value="Antimicrobial_frog_1"/>
</dbReference>
<dbReference type="InterPro" id="IPR004275">
    <property type="entry name" value="Frog_antimicrobial_propeptide"/>
</dbReference>
<dbReference type="Pfam" id="PF08018">
    <property type="entry name" value="Antimicrobial_1"/>
    <property type="match status" value="1"/>
</dbReference>
<dbReference type="Pfam" id="PF03032">
    <property type="entry name" value="FSAP_sig_propep"/>
    <property type="match status" value="1"/>
</dbReference>
<name>BRB_AMOLO</name>
<feature type="signal peptide" evidence="2">
    <location>
        <begin position="1"/>
        <end position="22"/>
    </location>
</feature>
<feature type="propeptide" id="PRO_0000450015" evidence="6">
    <location>
        <begin position="23"/>
        <end position="46"/>
    </location>
</feature>
<feature type="peptide" id="PRO_5002630110" description="Brevinin-ALb" evidence="3">
    <location>
        <begin position="47"/>
        <end position="70"/>
    </location>
</feature>
<feature type="disulfide bond" evidence="1">
    <location>
        <begin position="64"/>
        <end position="70"/>
    </location>
</feature>
<proteinExistence type="evidence at protein level"/>
<keyword id="KW-0878">Amphibian defense peptide</keyword>
<keyword id="KW-0044">Antibiotic</keyword>
<keyword id="KW-0929">Antimicrobial</keyword>
<keyword id="KW-0165">Cleavage on pair of basic residues</keyword>
<keyword id="KW-0204">Cytolysis</keyword>
<keyword id="KW-0903">Direct protein sequencing</keyword>
<keyword id="KW-1015">Disulfide bond</keyword>
<keyword id="KW-0295">Fungicide</keyword>
<keyword id="KW-0354">Hemolysis</keyword>
<keyword id="KW-0391">Immunity</keyword>
<keyword id="KW-0399">Innate immunity</keyword>
<keyword id="KW-0964">Secreted</keyword>
<keyword id="KW-0732">Signal</keyword>
<organism>
    <name type="scientific">Amolops loloensis</name>
    <name type="common">Lolokou Sucker Frog</name>
    <name type="synonym">Staurois loloensis</name>
    <dbReference type="NCBI Taxonomy" id="318551"/>
    <lineage>
        <taxon>Eukaryota</taxon>
        <taxon>Metazoa</taxon>
        <taxon>Chordata</taxon>
        <taxon>Craniata</taxon>
        <taxon>Vertebrata</taxon>
        <taxon>Euteleostomi</taxon>
        <taxon>Amphibia</taxon>
        <taxon>Batrachia</taxon>
        <taxon>Anura</taxon>
        <taxon>Neobatrachia</taxon>
        <taxon>Ranoidea</taxon>
        <taxon>Ranidae</taxon>
        <taxon>Amolops</taxon>
    </lineage>
</organism>